<comment type="function">
    <text evidence="1">Catalyzes the conversion of dethiobiotin (DTB) to biotin by the insertion of a sulfur atom into dethiobiotin via a radical-based mechanism.</text>
</comment>
<comment type="catalytic activity">
    <reaction evidence="1">
        <text>(4R,5S)-dethiobiotin + (sulfur carrier)-SH + 2 reduced [2Fe-2S]-[ferredoxin] + 2 S-adenosyl-L-methionine = (sulfur carrier)-H + biotin + 2 5'-deoxyadenosine + 2 L-methionine + 2 oxidized [2Fe-2S]-[ferredoxin]</text>
        <dbReference type="Rhea" id="RHEA:22060"/>
        <dbReference type="Rhea" id="RHEA-COMP:10000"/>
        <dbReference type="Rhea" id="RHEA-COMP:10001"/>
        <dbReference type="Rhea" id="RHEA-COMP:14737"/>
        <dbReference type="Rhea" id="RHEA-COMP:14739"/>
        <dbReference type="ChEBI" id="CHEBI:17319"/>
        <dbReference type="ChEBI" id="CHEBI:29917"/>
        <dbReference type="ChEBI" id="CHEBI:33737"/>
        <dbReference type="ChEBI" id="CHEBI:33738"/>
        <dbReference type="ChEBI" id="CHEBI:57586"/>
        <dbReference type="ChEBI" id="CHEBI:57844"/>
        <dbReference type="ChEBI" id="CHEBI:59789"/>
        <dbReference type="ChEBI" id="CHEBI:64428"/>
        <dbReference type="ChEBI" id="CHEBI:149473"/>
        <dbReference type="EC" id="2.8.1.6"/>
    </reaction>
</comment>
<comment type="cofactor">
    <cofactor evidence="1">
        <name>[4Fe-4S] cluster</name>
        <dbReference type="ChEBI" id="CHEBI:49883"/>
    </cofactor>
    <text evidence="1">Binds 1 [4Fe-4S] cluster. The cluster is coordinated with 3 cysteines and an exchangeable S-adenosyl-L-methionine.</text>
</comment>
<comment type="cofactor">
    <cofactor evidence="1">
        <name>[2Fe-2S] cluster</name>
        <dbReference type="ChEBI" id="CHEBI:190135"/>
    </cofactor>
    <text evidence="1">Binds 1 [2Fe-2S] cluster. The cluster is coordinated with 3 cysteines and 1 arginine.</text>
</comment>
<comment type="pathway">
    <text evidence="1">Cofactor biosynthesis; biotin biosynthesis; biotin from 7,8-diaminononanoate: step 2/2.</text>
</comment>
<comment type="subunit">
    <text evidence="1">Homodimer.</text>
</comment>
<comment type="similarity">
    <text evidence="1">Belongs to the radical SAM superfamily. Biotin synthase family.</text>
</comment>
<reference key="1">
    <citation type="submission" date="2006-08" db="EMBL/GenBank/DDBJ databases">
        <title>Complete sequence of chromosome 1 of Shewanella sp. MR-7.</title>
        <authorList>
            <person name="Copeland A."/>
            <person name="Lucas S."/>
            <person name="Lapidus A."/>
            <person name="Barry K."/>
            <person name="Detter J.C."/>
            <person name="Glavina del Rio T."/>
            <person name="Hammon N."/>
            <person name="Israni S."/>
            <person name="Dalin E."/>
            <person name="Tice H."/>
            <person name="Pitluck S."/>
            <person name="Kiss H."/>
            <person name="Brettin T."/>
            <person name="Bruce D."/>
            <person name="Han C."/>
            <person name="Tapia R."/>
            <person name="Gilna P."/>
            <person name="Schmutz J."/>
            <person name="Larimer F."/>
            <person name="Land M."/>
            <person name="Hauser L."/>
            <person name="Kyrpides N."/>
            <person name="Mikhailova N."/>
            <person name="Nealson K."/>
            <person name="Konstantinidis K."/>
            <person name="Klappenbach J."/>
            <person name="Tiedje J."/>
            <person name="Richardson P."/>
        </authorList>
    </citation>
    <scope>NUCLEOTIDE SEQUENCE [LARGE SCALE GENOMIC DNA]</scope>
    <source>
        <strain>MR-7</strain>
    </source>
</reference>
<organism>
    <name type="scientific">Shewanella sp. (strain MR-7)</name>
    <dbReference type="NCBI Taxonomy" id="60481"/>
    <lineage>
        <taxon>Bacteria</taxon>
        <taxon>Pseudomonadati</taxon>
        <taxon>Pseudomonadota</taxon>
        <taxon>Gammaproteobacteria</taxon>
        <taxon>Alteromonadales</taxon>
        <taxon>Shewanellaceae</taxon>
        <taxon>Shewanella</taxon>
    </lineage>
</organism>
<accession>Q0HTY9</accession>
<dbReference type="EC" id="2.8.1.6" evidence="1"/>
<dbReference type="EMBL" id="CP000444">
    <property type="protein sequence ID" value="ABI43416.1"/>
    <property type="molecule type" value="Genomic_DNA"/>
</dbReference>
<dbReference type="SMR" id="Q0HTY9"/>
<dbReference type="KEGG" id="shm:Shewmr7_2431"/>
<dbReference type="HOGENOM" id="CLU_033172_1_2_6"/>
<dbReference type="UniPathway" id="UPA00078">
    <property type="reaction ID" value="UER00162"/>
</dbReference>
<dbReference type="GO" id="GO:0051537">
    <property type="term" value="F:2 iron, 2 sulfur cluster binding"/>
    <property type="evidence" value="ECO:0007669"/>
    <property type="project" value="UniProtKB-KW"/>
</dbReference>
<dbReference type="GO" id="GO:0051539">
    <property type="term" value="F:4 iron, 4 sulfur cluster binding"/>
    <property type="evidence" value="ECO:0007669"/>
    <property type="project" value="UniProtKB-KW"/>
</dbReference>
<dbReference type="GO" id="GO:0004076">
    <property type="term" value="F:biotin synthase activity"/>
    <property type="evidence" value="ECO:0007669"/>
    <property type="project" value="UniProtKB-UniRule"/>
</dbReference>
<dbReference type="GO" id="GO:0005506">
    <property type="term" value="F:iron ion binding"/>
    <property type="evidence" value="ECO:0007669"/>
    <property type="project" value="UniProtKB-UniRule"/>
</dbReference>
<dbReference type="GO" id="GO:0009102">
    <property type="term" value="P:biotin biosynthetic process"/>
    <property type="evidence" value="ECO:0007669"/>
    <property type="project" value="UniProtKB-UniRule"/>
</dbReference>
<dbReference type="CDD" id="cd01335">
    <property type="entry name" value="Radical_SAM"/>
    <property type="match status" value="1"/>
</dbReference>
<dbReference type="FunFam" id="3.20.20.70:FF:000011">
    <property type="entry name" value="Biotin synthase"/>
    <property type="match status" value="1"/>
</dbReference>
<dbReference type="Gene3D" id="3.20.20.70">
    <property type="entry name" value="Aldolase class I"/>
    <property type="match status" value="1"/>
</dbReference>
<dbReference type="HAMAP" id="MF_01694">
    <property type="entry name" value="BioB"/>
    <property type="match status" value="1"/>
</dbReference>
<dbReference type="InterPro" id="IPR013785">
    <property type="entry name" value="Aldolase_TIM"/>
</dbReference>
<dbReference type="InterPro" id="IPR010722">
    <property type="entry name" value="BATS_dom"/>
</dbReference>
<dbReference type="InterPro" id="IPR002684">
    <property type="entry name" value="Biotin_synth/BioAB"/>
</dbReference>
<dbReference type="InterPro" id="IPR024177">
    <property type="entry name" value="Biotin_synthase"/>
</dbReference>
<dbReference type="InterPro" id="IPR006638">
    <property type="entry name" value="Elp3/MiaA/NifB-like_rSAM"/>
</dbReference>
<dbReference type="InterPro" id="IPR007197">
    <property type="entry name" value="rSAM"/>
</dbReference>
<dbReference type="NCBIfam" id="TIGR00433">
    <property type="entry name" value="bioB"/>
    <property type="match status" value="1"/>
</dbReference>
<dbReference type="PANTHER" id="PTHR22976">
    <property type="entry name" value="BIOTIN SYNTHASE"/>
    <property type="match status" value="1"/>
</dbReference>
<dbReference type="PANTHER" id="PTHR22976:SF2">
    <property type="entry name" value="BIOTIN SYNTHASE, MITOCHONDRIAL"/>
    <property type="match status" value="1"/>
</dbReference>
<dbReference type="Pfam" id="PF06968">
    <property type="entry name" value="BATS"/>
    <property type="match status" value="1"/>
</dbReference>
<dbReference type="Pfam" id="PF04055">
    <property type="entry name" value="Radical_SAM"/>
    <property type="match status" value="1"/>
</dbReference>
<dbReference type="PIRSF" id="PIRSF001619">
    <property type="entry name" value="Biotin_synth"/>
    <property type="match status" value="1"/>
</dbReference>
<dbReference type="SFLD" id="SFLDF00272">
    <property type="entry name" value="biotin_synthase"/>
    <property type="match status" value="1"/>
</dbReference>
<dbReference type="SFLD" id="SFLDG01278">
    <property type="entry name" value="biotin_synthase_like"/>
    <property type="match status" value="1"/>
</dbReference>
<dbReference type="SMART" id="SM00876">
    <property type="entry name" value="BATS"/>
    <property type="match status" value="1"/>
</dbReference>
<dbReference type="SMART" id="SM00729">
    <property type="entry name" value="Elp3"/>
    <property type="match status" value="1"/>
</dbReference>
<dbReference type="SUPFAM" id="SSF102114">
    <property type="entry name" value="Radical SAM enzymes"/>
    <property type="match status" value="1"/>
</dbReference>
<dbReference type="PROSITE" id="PS51918">
    <property type="entry name" value="RADICAL_SAM"/>
    <property type="match status" value="1"/>
</dbReference>
<sequence length="350" mass="38732">MSQLQVRHDWKREEIEALFALPMNDLLFKAHSIHREVYDPNEVQISRLLSIKTGACPEDCKYCPQSARYDTGLEKERLLAMETVLTEARSAKAAGASRFCMGAAWRNPKDKDMPYLKQMVQEVKALGMETCMTLGMLSAEQANELADAGLDYYNHNLDTSPEYYGDVITTRTYQNRLDTLSHVRASGMKVCSGGIVGMGEKATDRAGLLQQLANLPQHPDSVPINMLVKVAGTPFEKLDDLDPLEFVRTIAVARILMPKSRVRLSAGRENMTDELQAMCFFAGANSIFYGCKLLTTPNPEESDDMGLFRRLGLRPEQGAAATIDDEQAVLAKAAAHQDKASAPFYDAAAL</sequence>
<name>BIOB_SHESR</name>
<feature type="chain" id="PRO_0000381628" description="Biotin synthase">
    <location>
        <begin position="1"/>
        <end position="350"/>
    </location>
</feature>
<feature type="domain" description="Radical SAM core" evidence="2">
    <location>
        <begin position="41"/>
        <end position="268"/>
    </location>
</feature>
<feature type="binding site" evidence="1">
    <location>
        <position position="56"/>
    </location>
    <ligand>
        <name>[4Fe-4S] cluster</name>
        <dbReference type="ChEBI" id="CHEBI:49883"/>
        <note>4Fe-4S-S-AdoMet</note>
    </ligand>
</feature>
<feature type="binding site" evidence="1">
    <location>
        <position position="60"/>
    </location>
    <ligand>
        <name>[4Fe-4S] cluster</name>
        <dbReference type="ChEBI" id="CHEBI:49883"/>
        <note>4Fe-4S-S-AdoMet</note>
    </ligand>
</feature>
<feature type="binding site" evidence="1">
    <location>
        <position position="63"/>
    </location>
    <ligand>
        <name>[4Fe-4S] cluster</name>
        <dbReference type="ChEBI" id="CHEBI:49883"/>
        <note>4Fe-4S-S-AdoMet</note>
    </ligand>
</feature>
<feature type="binding site" evidence="1">
    <location>
        <position position="100"/>
    </location>
    <ligand>
        <name>[2Fe-2S] cluster</name>
        <dbReference type="ChEBI" id="CHEBI:190135"/>
    </ligand>
</feature>
<feature type="binding site" evidence="1">
    <location>
        <position position="131"/>
    </location>
    <ligand>
        <name>[2Fe-2S] cluster</name>
        <dbReference type="ChEBI" id="CHEBI:190135"/>
    </ligand>
</feature>
<feature type="binding site" evidence="1">
    <location>
        <position position="191"/>
    </location>
    <ligand>
        <name>[2Fe-2S] cluster</name>
        <dbReference type="ChEBI" id="CHEBI:190135"/>
    </ligand>
</feature>
<feature type="binding site" evidence="1">
    <location>
        <position position="263"/>
    </location>
    <ligand>
        <name>[2Fe-2S] cluster</name>
        <dbReference type="ChEBI" id="CHEBI:190135"/>
    </ligand>
</feature>
<evidence type="ECO:0000255" key="1">
    <source>
        <dbReference type="HAMAP-Rule" id="MF_01694"/>
    </source>
</evidence>
<evidence type="ECO:0000255" key="2">
    <source>
        <dbReference type="PROSITE-ProRule" id="PRU01266"/>
    </source>
</evidence>
<proteinExistence type="inferred from homology"/>
<protein>
    <recommendedName>
        <fullName evidence="1">Biotin synthase</fullName>
        <ecNumber evidence="1">2.8.1.6</ecNumber>
    </recommendedName>
</protein>
<keyword id="KW-0001">2Fe-2S</keyword>
<keyword id="KW-0004">4Fe-4S</keyword>
<keyword id="KW-0093">Biotin biosynthesis</keyword>
<keyword id="KW-0408">Iron</keyword>
<keyword id="KW-0411">Iron-sulfur</keyword>
<keyword id="KW-0479">Metal-binding</keyword>
<keyword id="KW-0949">S-adenosyl-L-methionine</keyword>
<keyword id="KW-0808">Transferase</keyword>
<gene>
    <name evidence="1" type="primary">bioB</name>
    <name type="ordered locus">Shewmr7_2431</name>
</gene>